<gene>
    <name type="primary">graS</name>
    <name type="ordered locus">SERP0313</name>
</gene>
<protein>
    <recommendedName>
        <fullName>Sensor histidine kinase GraS</fullName>
        <ecNumber>2.7.13.3</ecNumber>
    </recommendedName>
    <alternativeName>
        <fullName>Glycopeptide resistance-associated protein S</fullName>
    </alternativeName>
</protein>
<keyword id="KW-0046">Antibiotic resistance</keyword>
<keyword id="KW-0067">ATP-binding</keyword>
<keyword id="KW-1003">Cell membrane</keyword>
<keyword id="KW-0418">Kinase</keyword>
<keyword id="KW-0472">Membrane</keyword>
<keyword id="KW-0547">Nucleotide-binding</keyword>
<keyword id="KW-0597">Phosphoprotein</keyword>
<keyword id="KW-1185">Reference proteome</keyword>
<keyword id="KW-0808">Transferase</keyword>
<keyword id="KW-0812">Transmembrane</keyword>
<keyword id="KW-1133">Transmembrane helix</keyword>
<keyword id="KW-0902">Two-component regulatory system</keyword>
<keyword id="KW-0843">Virulence</keyword>
<sequence>MNNFRWFWFFIKSRINWILWILFLNIILLGVAYIDYEISVESVFYIVILNVGLSILFLLFTFVKEVRLSKHFYEDKEIEEIKHKDLAETPFQQQVIDYLYRHIAAQKEKVVEQQLQIKNHEQTITEFVHDIKTPVTAMKLLIDQENDDQRKRALLFEWSRINEMLDKQLYLTRLETHHRDMYFDYISLKRMVIDEIQVTRHISQAKGIGFELDFKDEQKVYTDVKWCRMMIRQVLSNSLKYSDNSTINLSGYNIEGHVVLKIKDYGRGISKRDLPRIFDRGFTSTTDRNDTASSGMGLYLVQSVKEQLGIEVKVDSIVGKGTTFYFIFPQQNEIIERMSKVTRLSF</sequence>
<dbReference type="EC" id="2.7.13.3"/>
<dbReference type="EMBL" id="CP000029">
    <property type="protein sequence ID" value="AAW53668.1"/>
    <property type="molecule type" value="Genomic_DNA"/>
</dbReference>
<dbReference type="RefSeq" id="WP_002438833.1">
    <property type="nucleotide sequence ID" value="NC_002976.3"/>
</dbReference>
<dbReference type="SMR" id="Q5HR80"/>
<dbReference type="STRING" id="176279.SERP0313"/>
<dbReference type="GeneID" id="50019416"/>
<dbReference type="KEGG" id="ser:SERP0313"/>
<dbReference type="eggNOG" id="COG2205">
    <property type="taxonomic scope" value="Bacteria"/>
</dbReference>
<dbReference type="HOGENOM" id="CLU_000445_13_1_9"/>
<dbReference type="Proteomes" id="UP000000531">
    <property type="component" value="Chromosome"/>
</dbReference>
<dbReference type="GO" id="GO:0005886">
    <property type="term" value="C:plasma membrane"/>
    <property type="evidence" value="ECO:0007669"/>
    <property type="project" value="UniProtKB-SubCell"/>
</dbReference>
<dbReference type="GO" id="GO:0005524">
    <property type="term" value="F:ATP binding"/>
    <property type="evidence" value="ECO:0007669"/>
    <property type="project" value="UniProtKB-KW"/>
</dbReference>
<dbReference type="GO" id="GO:0004721">
    <property type="term" value="F:phosphoprotein phosphatase activity"/>
    <property type="evidence" value="ECO:0007669"/>
    <property type="project" value="TreeGrafter"/>
</dbReference>
<dbReference type="GO" id="GO:0000155">
    <property type="term" value="F:phosphorelay sensor kinase activity"/>
    <property type="evidence" value="ECO:0007669"/>
    <property type="project" value="TreeGrafter"/>
</dbReference>
<dbReference type="GO" id="GO:0016036">
    <property type="term" value="P:cellular response to phosphate starvation"/>
    <property type="evidence" value="ECO:0007669"/>
    <property type="project" value="TreeGrafter"/>
</dbReference>
<dbReference type="GO" id="GO:0046677">
    <property type="term" value="P:response to antibiotic"/>
    <property type="evidence" value="ECO:0007669"/>
    <property type="project" value="UniProtKB-KW"/>
</dbReference>
<dbReference type="Gene3D" id="3.30.565.10">
    <property type="entry name" value="Histidine kinase-like ATPase, C-terminal domain"/>
    <property type="match status" value="1"/>
</dbReference>
<dbReference type="InterPro" id="IPR050351">
    <property type="entry name" value="2-comp_sensor_kinase"/>
</dbReference>
<dbReference type="InterPro" id="IPR036890">
    <property type="entry name" value="HATPase_C_sf"/>
</dbReference>
<dbReference type="InterPro" id="IPR005467">
    <property type="entry name" value="His_kinase_dom"/>
</dbReference>
<dbReference type="InterPro" id="IPR004358">
    <property type="entry name" value="Sig_transdc_His_kin-like_C"/>
</dbReference>
<dbReference type="PANTHER" id="PTHR45453:SF2">
    <property type="entry name" value="HISTIDINE KINASE"/>
    <property type="match status" value="1"/>
</dbReference>
<dbReference type="PANTHER" id="PTHR45453">
    <property type="entry name" value="PHOSPHATE REGULON SENSOR PROTEIN PHOR"/>
    <property type="match status" value="1"/>
</dbReference>
<dbReference type="Pfam" id="PF02518">
    <property type="entry name" value="HATPase_c"/>
    <property type="match status" value="1"/>
</dbReference>
<dbReference type="PRINTS" id="PR00344">
    <property type="entry name" value="BCTRLSENSOR"/>
</dbReference>
<dbReference type="SMART" id="SM00387">
    <property type="entry name" value="HATPase_c"/>
    <property type="match status" value="1"/>
</dbReference>
<dbReference type="SUPFAM" id="SSF55874">
    <property type="entry name" value="ATPase domain of HSP90 chaperone/DNA topoisomerase II/histidine kinase"/>
    <property type="match status" value="1"/>
</dbReference>
<dbReference type="PROSITE" id="PS50109">
    <property type="entry name" value="HIS_KIN"/>
    <property type="match status" value="1"/>
</dbReference>
<reference key="1">
    <citation type="journal article" date="2005" name="J. Bacteriol.">
        <title>Insights on evolution of virulence and resistance from the complete genome analysis of an early methicillin-resistant Staphylococcus aureus strain and a biofilm-producing methicillin-resistant Staphylococcus epidermidis strain.</title>
        <authorList>
            <person name="Gill S.R."/>
            <person name="Fouts D.E."/>
            <person name="Archer G.L."/>
            <person name="Mongodin E.F."/>
            <person name="DeBoy R.T."/>
            <person name="Ravel J."/>
            <person name="Paulsen I.T."/>
            <person name="Kolonay J.F."/>
            <person name="Brinkac L.M."/>
            <person name="Beanan M.J."/>
            <person name="Dodson R.J."/>
            <person name="Daugherty S.C."/>
            <person name="Madupu R."/>
            <person name="Angiuoli S.V."/>
            <person name="Durkin A.S."/>
            <person name="Haft D.H."/>
            <person name="Vamathevan J.J."/>
            <person name="Khouri H."/>
            <person name="Utterback T.R."/>
            <person name="Lee C."/>
            <person name="Dimitrov G."/>
            <person name="Jiang L."/>
            <person name="Qin H."/>
            <person name="Weidman J."/>
            <person name="Tran K."/>
            <person name="Kang K.H."/>
            <person name="Hance I.R."/>
            <person name="Nelson K.E."/>
            <person name="Fraser C.M."/>
        </authorList>
    </citation>
    <scope>NUCLEOTIDE SEQUENCE [LARGE SCALE GENOMIC DNA]</scope>
    <source>
        <strain>ATCC 35984 / DSM 28319 / BCRC 17069 / CCUG 31568 / BM 3577 / RP62A</strain>
    </source>
</reference>
<organism>
    <name type="scientific">Staphylococcus epidermidis (strain ATCC 35984 / DSM 28319 / BCRC 17069 / CCUG 31568 / BM 3577 / RP62A)</name>
    <dbReference type="NCBI Taxonomy" id="176279"/>
    <lineage>
        <taxon>Bacteria</taxon>
        <taxon>Bacillati</taxon>
        <taxon>Bacillota</taxon>
        <taxon>Bacilli</taxon>
        <taxon>Bacillales</taxon>
        <taxon>Staphylococcaceae</taxon>
        <taxon>Staphylococcus</taxon>
    </lineage>
</organism>
<comment type="function">
    <text evidence="1">Member of the two-component regulatory system GraR/GraS involved in resistance against cationic antimicrobial peptides (CAMPs). GraS probably functions as a sensor protein kinase which is autophosphorylated at a histidine residue and transfers its phosphate group to GraR (By similarity).</text>
</comment>
<comment type="catalytic activity">
    <reaction>
        <text>ATP + protein L-histidine = ADP + protein N-phospho-L-histidine.</text>
        <dbReference type="EC" id="2.7.13.3"/>
    </reaction>
</comment>
<comment type="subcellular location">
    <subcellularLocation>
        <location evidence="4">Cell membrane</location>
        <topology evidence="4">Multi-pass membrane protein</topology>
    </subcellularLocation>
</comment>
<comment type="PTM">
    <text evidence="1">Autophosphorylated.</text>
</comment>
<name>GRAS_STAEQ</name>
<accession>Q5HR80</accession>
<proteinExistence type="inferred from homology"/>
<evidence type="ECO:0000250" key="1"/>
<evidence type="ECO:0000255" key="2"/>
<evidence type="ECO:0000255" key="3">
    <source>
        <dbReference type="PROSITE-ProRule" id="PRU00107"/>
    </source>
</evidence>
<evidence type="ECO:0000305" key="4"/>
<feature type="chain" id="PRO_0000347928" description="Sensor histidine kinase GraS">
    <location>
        <begin position="1"/>
        <end position="346"/>
    </location>
</feature>
<feature type="transmembrane region" description="Helical" evidence="2">
    <location>
        <begin position="15"/>
        <end position="35"/>
    </location>
</feature>
<feature type="transmembrane region" description="Helical" evidence="2">
    <location>
        <begin position="43"/>
        <end position="63"/>
    </location>
</feature>
<feature type="domain" description="Histidine kinase" evidence="3">
    <location>
        <begin position="126"/>
        <end position="332"/>
    </location>
</feature>
<feature type="modified residue" description="Phosphohistidine; by autocatalysis" evidence="3">
    <location>
        <position position="129"/>
    </location>
</feature>